<protein>
    <recommendedName>
        <fullName evidence="1">Endoribonuclease YbeY</fullName>
        <ecNumber evidence="1">3.1.-.-</ecNumber>
    </recommendedName>
</protein>
<proteinExistence type="inferred from homology"/>
<evidence type="ECO:0000255" key="1">
    <source>
        <dbReference type="HAMAP-Rule" id="MF_00009"/>
    </source>
</evidence>
<sequence length="161" mass="18500">MTVLEIDLLDETKNLLDEDKQLVENILQFAAEYLKIEQGTELSLTFTTNEGIREINREYRDKDQATDVISFALEEMGDGETEIDWGEFDLETPRMLGDIIISTEKAEEQAKDYGHTKARELGFLAVHGLLHLLGYDHMEPDEEKIMFGLQKEVLDAYGLER</sequence>
<keyword id="KW-0963">Cytoplasm</keyword>
<keyword id="KW-0255">Endonuclease</keyword>
<keyword id="KW-0378">Hydrolase</keyword>
<keyword id="KW-0479">Metal-binding</keyword>
<keyword id="KW-0540">Nuclease</keyword>
<keyword id="KW-0690">Ribosome biogenesis</keyword>
<keyword id="KW-0698">rRNA processing</keyword>
<keyword id="KW-0862">Zinc</keyword>
<feature type="chain" id="PRO_1000201739" description="Endoribonuclease YbeY">
    <location>
        <begin position="1"/>
        <end position="161"/>
    </location>
</feature>
<feature type="binding site" evidence="1">
    <location>
        <position position="127"/>
    </location>
    <ligand>
        <name>Zn(2+)</name>
        <dbReference type="ChEBI" id="CHEBI:29105"/>
        <note>catalytic</note>
    </ligand>
</feature>
<feature type="binding site" evidence="1">
    <location>
        <position position="131"/>
    </location>
    <ligand>
        <name>Zn(2+)</name>
        <dbReference type="ChEBI" id="CHEBI:29105"/>
        <note>catalytic</note>
    </ligand>
</feature>
<feature type="binding site" evidence="1">
    <location>
        <position position="137"/>
    </location>
    <ligand>
        <name>Zn(2+)</name>
        <dbReference type="ChEBI" id="CHEBI:29105"/>
        <note>catalytic</note>
    </ligand>
</feature>
<dbReference type="EC" id="3.1.-.-" evidence="1"/>
<dbReference type="EMBL" id="FM242711">
    <property type="protein sequence ID" value="CAS05237.1"/>
    <property type="molecule type" value="Genomic_DNA"/>
</dbReference>
<dbReference type="RefSeq" id="WP_003726015.1">
    <property type="nucleotide sequence ID" value="NC_012488.1"/>
</dbReference>
<dbReference type="SMR" id="C1KVB2"/>
<dbReference type="KEGG" id="lmc:Lm4b_01475"/>
<dbReference type="HOGENOM" id="CLU_106710_3_0_9"/>
<dbReference type="GO" id="GO:0005737">
    <property type="term" value="C:cytoplasm"/>
    <property type="evidence" value="ECO:0007669"/>
    <property type="project" value="UniProtKB-SubCell"/>
</dbReference>
<dbReference type="GO" id="GO:0004222">
    <property type="term" value="F:metalloendopeptidase activity"/>
    <property type="evidence" value="ECO:0007669"/>
    <property type="project" value="InterPro"/>
</dbReference>
<dbReference type="GO" id="GO:0004521">
    <property type="term" value="F:RNA endonuclease activity"/>
    <property type="evidence" value="ECO:0007669"/>
    <property type="project" value="UniProtKB-UniRule"/>
</dbReference>
<dbReference type="GO" id="GO:0008270">
    <property type="term" value="F:zinc ion binding"/>
    <property type="evidence" value="ECO:0007669"/>
    <property type="project" value="UniProtKB-UniRule"/>
</dbReference>
<dbReference type="GO" id="GO:0006364">
    <property type="term" value="P:rRNA processing"/>
    <property type="evidence" value="ECO:0007669"/>
    <property type="project" value="UniProtKB-UniRule"/>
</dbReference>
<dbReference type="Gene3D" id="3.40.390.30">
    <property type="entry name" value="Metalloproteases ('zincins'), catalytic domain"/>
    <property type="match status" value="1"/>
</dbReference>
<dbReference type="HAMAP" id="MF_00009">
    <property type="entry name" value="Endoribonucl_YbeY"/>
    <property type="match status" value="1"/>
</dbReference>
<dbReference type="InterPro" id="IPR023091">
    <property type="entry name" value="MetalPrtase_cat_dom_sf_prd"/>
</dbReference>
<dbReference type="InterPro" id="IPR002036">
    <property type="entry name" value="YbeY"/>
</dbReference>
<dbReference type="InterPro" id="IPR020549">
    <property type="entry name" value="YbeY_CS"/>
</dbReference>
<dbReference type="NCBIfam" id="TIGR00043">
    <property type="entry name" value="rRNA maturation RNase YbeY"/>
    <property type="match status" value="1"/>
</dbReference>
<dbReference type="PANTHER" id="PTHR46986">
    <property type="entry name" value="ENDORIBONUCLEASE YBEY, CHLOROPLASTIC"/>
    <property type="match status" value="1"/>
</dbReference>
<dbReference type="PANTHER" id="PTHR46986:SF1">
    <property type="entry name" value="ENDORIBONUCLEASE YBEY, CHLOROPLASTIC"/>
    <property type="match status" value="1"/>
</dbReference>
<dbReference type="Pfam" id="PF02130">
    <property type="entry name" value="YbeY"/>
    <property type="match status" value="1"/>
</dbReference>
<dbReference type="SUPFAM" id="SSF55486">
    <property type="entry name" value="Metalloproteases ('zincins'), catalytic domain"/>
    <property type="match status" value="1"/>
</dbReference>
<dbReference type="PROSITE" id="PS01306">
    <property type="entry name" value="UPF0054"/>
    <property type="match status" value="1"/>
</dbReference>
<reference key="1">
    <citation type="journal article" date="2012" name="BMC Genomics">
        <title>Comparative genomics and transcriptomics of lineages I, II, and III strains of Listeria monocytogenes.</title>
        <authorList>
            <person name="Hain T."/>
            <person name="Ghai R."/>
            <person name="Billion A."/>
            <person name="Kuenne C.T."/>
            <person name="Steinweg C."/>
            <person name="Izar B."/>
            <person name="Mohamed W."/>
            <person name="Mraheil M."/>
            <person name="Domann E."/>
            <person name="Schaffrath S."/>
            <person name="Karst U."/>
            <person name="Goesmann A."/>
            <person name="Oehm S."/>
            <person name="Puhler A."/>
            <person name="Merkl R."/>
            <person name="Vorwerk S."/>
            <person name="Glaser P."/>
            <person name="Garrido P."/>
            <person name="Rusniok C."/>
            <person name="Buchrieser C."/>
            <person name="Goebel W."/>
            <person name="Chakraborty T."/>
        </authorList>
    </citation>
    <scope>NUCLEOTIDE SEQUENCE [LARGE SCALE GENOMIC DNA]</scope>
    <source>
        <strain>CLIP80459</strain>
    </source>
</reference>
<accession>C1KVB2</accession>
<organism>
    <name type="scientific">Listeria monocytogenes serotype 4b (strain CLIP80459)</name>
    <dbReference type="NCBI Taxonomy" id="568819"/>
    <lineage>
        <taxon>Bacteria</taxon>
        <taxon>Bacillati</taxon>
        <taxon>Bacillota</taxon>
        <taxon>Bacilli</taxon>
        <taxon>Bacillales</taxon>
        <taxon>Listeriaceae</taxon>
        <taxon>Listeria</taxon>
    </lineage>
</organism>
<gene>
    <name evidence="1" type="primary">ybeY</name>
    <name type="ordered locus">Lm4b_01475</name>
</gene>
<name>YBEY_LISMC</name>
<comment type="function">
    <text evidence="1">Single strand-specific metallo-endoribonuclease involved in late-stage 70S ribosome quality control and in maturation of the 3' terminus of the 16S rRNA.</text>
</comment>
<comment type="cofactor">
    <cofactor evidence="1">
        <name>Zn(2+)</name>
        <dbReference type="ChEBI" id="CHEBI:29105"/>
    </cofactor>
    <text evidence="1">Binds 1 zinc ion.</text>
</comment>
<comment type="subcellular location">
    <subcellularLocation>
        <location evidence="1">Cytoplasm</location>
    </subcellularLocation>
</comment>
<comment type="similarity">
    <text evidence="1">Belongs to the endoribonuclease YbeY family.</text>
</comment>